<sequence length="177" mass="21178">MKLPKEGDFITIQSYKHDGSLHRTWRDTMVLKTTENALIGVNDHTLVTESDGRRWVTREPAIVYFHKKYWFNIIAMIRDNGVSYYCNLASPYMMDTEALKYIDYDLDVKVFADGEKRLLDVDEYEIHKKEMQYSADMDFILKENVKILVDWINHEKGPFSKAYITIWYKRYLELKNR</sequence>
<reference key="1">
    <citation type="journal article" date="2006" name="Proc. Natl. Acad. Sci. U.S.A.">
        <title>Molecular genetic anatomy of inter- and intraserotype variation in the human bacterial pathogen group A Streptococcus.</title>
        <authorList>
            <person name="Beres S.B."/>
            <person name="Richter E.W."/>
            <person name="Nagiec M.J."/>
            <person name="Sumby P."/>
            <person name="Porcella S.F."/>
            <person name="DeLeo F.R."/>
            <person name="Musser J.M."/>
        </authorList>
    </citation>
    <scope>NUCLEOTIDE SEQUENCE [LARGE SCALE GENOMIC DNA]</scope>
    <source>
        <strain>MGAS2096</strain>
    </source>
</reference>
<evidence type="ECO:0000255" key="1">
    <source>
        <dbReference type="HAMAP-Rule" id="MF_01568"/>
    </source>
</evidence>
<dbReference type="EC" id="3.6.1.15" evidence="1"/>
<dbReference type="EC" id="3.6.1.6" evidence="1"/>
<dbReference type="EMBL" id="CP000261">
    <property type="protein sequence ID" value="ABF36394.1"/>
    <property type="molecule type" value="Genomic_DNA"/>
</dbReference>
<dbReference type="SMR" id="Q1JAL4"/>
<dbReference type="KEGG" id="spj:MGAS2096_Spy1342"/>
<dbReference type="HOGENOM" id="CLU_109787_1_0_9"/>
<dbReference type="GO" id="GO:0000287">
    <property type="term" value="F:magnesium ion binding"/>
    <property type="evidence" value="ECO:0007669"/>
    <property type="project" value="UniProtKB-UniRule"/>
</dbReference>
<dbReference type="GO" id="GO:0017110">
    <property type="term" value="F:nucleoside diphosphate phosphatase activity"/>
    <property type="evidence" value="ECO:0007669"/>
    <property type="project" value="UniProtKB-UniRule"/>
</dbReference>
<dbReference type="GO" id="GO:0017111">
    <property type="term" value="F:ribonucleoside triphosphate phosphatase activity"/>
    <property type="evidence" value="ECO:0007669"/>
    <property type="project" value="UniProtKB-UniRule"/>
</dbReference>
<dbReference type="Gene3D" id="2.40.380.10">
    <property type="entry name" value="FomD-like"/>
    <property type="match status" value="1"/>
</dbReference>
<dbReference type="HAMAP" id="MF_01568">
    <property type="entry name" value="Ntdp"/>
    <property type="match status" value="1"/>
</dbReference>
<dbReference type="InterPro" id="IPR007295">
    <property type="entry name" value="DUF402"/>
</dbReference>
<dbReference type="InterPro" id="IPR035930">
    <property type="entry name" value="FomD-like_sf"/>
</dbReference>
<dbReference type="InterPro" id="IPR050212">
    <property type="entry name" value="Ntdp-like"/>
</dbReference>
<dbReference type="InterPro" id="IPR016882">
    <property type="entry name" value="SA1684"/>
</dbReference>
<dbReference type="NCBIfam" id="NF010183">
    <property type="entry name" value="PRK13662.1"/>
    <property type="match status" value="1"/>
</dbReference>
<dbReference type="PANTHER" id="PTHR39159">
    <property type="match status" value="1"/>
</dbReference>
<dbReference type="PANTHER" id="PTHR39159:SF1">
    <property type="entry name" value="UPF0374 PROTEIN YGAC"/>
    <property type="match status" value="1"/>
</dbReference>
<dbReference type="Pfam" id="PF04167">
    <property type="entry name" value="DUF402"/>
    <property type="match status" value="1"/>
</dbReference>
<dbReference type="PIRSF" id="PIRSF028345">
    <property type="entry name" value="UCP028345"/>
    <property type="match status" value="1"/>
</dbReference>
<dbReference type="SUPFAM" id="SSF159234">
    <property type="entry name" value="FomD-like"/>
    <property type="match status" value="1"/>
</dbReference>
<gene>
    <name type="ordered locus">MGAS2096_Spy1342</name>
</gene>
<keyword id="KW-0378">Hydrolase</keyword>
<keyword id="KW-0460">Magnesium</keyword>
<keyword id="KW-0479">Metal-binding</keyword>
<feature type="chain" id="PRO_0000248125" description="Nucleoside triphosphate/diphosphate phosphatase">
    <location>
        <begin position="1"/>
        <end position="177"/>
    </location>
</feature>
<feature type="active site" description="Proton donor" evidence="1">
    <location>
        <position position="23"/>
    </location>
</feature>
<feature type="binding site" evidence="1">
    <location>
        <position position="87"/>
    </location>
    <ligand>
        <name>Mg(2+)</name>
        <dbReference type="ChEBI" id="CHEBI:18420"/>
        <label>1</label>
    </ligand>
</feature>
<feature type="binding site" evidence="1">
    <location>
        <position position="103"/>
    </location>
    <ligand>
        <name>Mg(2+)</name>
        <dbReference type="ChEBI" id="CHEBI:18420"/>
        <label>1</label>
    </ligand>
</feature>
<feature type="binding site" evidence="1">
    <location>
        <position position="105"/>
    </location>
    <ligand>
        <name>Mg(2+)</name>
        <dbReference type="ChEBI" id="CHEBI:18420"/>
        <label>2</label>
    </ligand>
</feature>
<feature type="binding site" evidence="1">
    <location>
        <position position="107"/>
    </location>
    <ligand>
        <name>Mg(2+)</name>
        <dbReference type="ChEBI" id="CHEBI:18420"/>
        <label>1</label>
    </ligand>
</feature>
<feature type="binding site" evidence="1">
    <location>
        <position position="107"/>
    </location>
    <ligand>
        <name>Mg(2+)</name>
        <dbReference type="ChEBI" id="CHEBI:18420"/>
        <label>2</label>
    </ligand>
</feature>
<feature type="binding site" evidence="1">
    <location>
        <position position="120"/>
    </location>
    <ligand>
        <name>Mg(2+)</name>
        <dbReference type="ChEBI" id="CHEBI:18420"/>
        <label>2</label>
    </ligand>
</feature>
<feature type="binding site" evidence="1">
    <location>
        <position position="123"/>
    </location>
    <ligand>
        <name>Mg(2+)</name>
        <dbReference type="ChEBI" id="CHEBI:18420"/>
        <label>2</label>
    </ligand>
</feature>
<proteinExistence type="inferred from homology"/>
<protein>
    <recommendedName>
        <fullName evidence="1">Nucleoside triphosphate/diphosphate phosphatase</fullName>
        <ecNumber evidence="1">3.6.1.15</ecNumber>
        <ecNumber evidence="1">3.6.1.6</ecNumber>
    </recommendedName>
</protein>
<name>NTDP_STRPB</name>
<organism>
    <name type="scientific">Streptococcus pyogenes serotype M12 (strain MGAS2096)</name>
    <dbReference type="NCBI Taxonomy" id="370553"/>
    <lineage>
        <taxon>Bacteria</taxon>
        <taxon>Bacillati</taxon>
        <taxon>Bacillota</taxon>
        <taxon>Bacilli</taxon>
        <taxon>Lactobacillales</taxon>
        <taxon>Streptococcaceae</taxon>
        <taxon>Streptococcus</taxon>
    </lineage>
</organism>
<accession>Q1JAL4</accession>
<comment type="function">
    <text evidence="1">Has nucleoside phosphatase activity towards nucleoside triphosphates and nucleoside diphosphates.</text>
</comment>
<comment type="catalytic activity">
    <reaction evidence="1">
        <text>a ribonucleoside 5'-triphosphate + H2O = a ribonucleoside 5'-diphosphate + phosphate + H(+)</text>
        <dbReference type="Rhea" id="RHEA:23680"/>
        <dbReference type="ChEBI" id="CHEBI:15377"/>
        <dbReference type="ChEBI" id="CHEBI:15378"/>
        <dbReference type="ChEBI" id="CHEBI:43474"/>
        <dbReference type="ChEBI" id="CHEBI:57930"/>
        <dbReference type="ChEBI" id="CHEBI:61557"/>
        <dbReference type="EC" id="3.6.1.15"/>
    </reaction>
</comment>
<comment type="catalytic activity">
    <reaction evidence="1">
        <text>a ribonucleoside 5'-diphosphate + H2O = a ribonucleoside 5'-phosphate + phosphate + H(+)</text>
        <dbReference type="Rhea" id="RHEA:36799"/>
        <dbReference type="ChEBI" id="CHEBI:15377"/>
        <dbReference type="ChEBI" id="CHEBI:15378"/>
        <dbReference type="ChEBI" id="CHEBI:43474"/>
        <dbReference type="ChEBI" id="CHEBI:57930"/>
        <dbReference type="ChEBI" id="CHEBI:58043"/>
        <dbReference type="EC" id="3.6.1.6"/>
    </reaction>
</comment>
<comment type="cofactor">
    <cofactor evidence="1">
        <name>Mg(2+)</name>
        <dbReference type="ChEBI" id="CHEBI:18420"/>
    </cofactor>
</comment>
<comment type="similarity">
    <text evidence="1">Belongs to the Ntdp family.</text>
</comment>